<gene>
    <name type="primary">LIG4</name>
    <name type="ordered locus">ACR008W</name>
</gene>
<evidence type="ECO:0000250" key="1">
    <source>
        <dbReference type="UniProtKB" id="P49917"/>
    </source>
</evidence>
<evidence type="ECO:0000250" key="2">
    <source>
        <dbReference type="UniProtKB" id="Q08387"/>
    </source>
</evidence>
<evidence type="ECO:0000255" key="3"/>
<evidence type="ECO:0000255" key="4">
    <source>
        <dbReference type="PROSITE-ProRule" id="PRU00033"/>
    </source>
</evidence>
<evidence type="ECO:0000255" key="5">
    <source>
        <dbReference type="PROSITE-ProRule" id="PRU10135"/>
    </source>
</evidence>
<evidence type="ECO:0000256" key="6">
    <source>
        <dbReference type="SAM" id="MobiDB-lite"/>
    </source>
</evidence>
<evidence type="ECO:0000305" key="7"/>
<dbReference type="EC" id="6.5.1.1" evidence="2"/>
<dbReference type="EMBL" id="AE016816">
    <property type="protein sequence ID" value="AAS51235.1"/>
    <property type="molecule type" value="Genomic_DNA"/>
</dbReference>
<dbReference type="RefSeq" id="NP_983411.1">
    <property type="nucleotide sequence ID" value="NM_208764.2"/>
</dbReference>
<dbReference type="SMR" id="Q75CA4"/>
<dbReference type="FunCoup" id="Q75CA4">
    <property type="interactions" value="600"/>
</dbReference>
<dbReference type="STRING" id="284811.Q75CA4"/>
<dbReference type="EnsemblFungi" id="AAS51235">
    <property type="protein sequence ID" value="AAS51235"/>
    <property type="gene ID" value="AGOS_ACR008W"/>
</dbReference>
<dbReference type="GeneID" id="4619536"/>
<dbReference type="KEGG" id="ago:AGOS_ACR008W"/>
<dbReference type="eggNOG" id="KOG0966">
    <property type="taxonomic scope" value="Eukaryota"/>
</dbReference>
<dbReference type="HOGENOM" id="CLU_004844_1_1_1"/>
<dbReference type="InParanoid" id="Q75CA4"/>
<dbReference type="OMA" id="EGIMIKH"/>
<dbReference type="OrthoDB" id="151490at2759"/>
<dbReference type="Proteomes" id="UP000000591">
    <property type="component" value="Chromosome III"/>
</dbReference>
<dbReference type="GO" id="GO:0032807">
    <property type="term" value="C:DNA ligase IV complex"/>
    <property type="evidence" value="ECO:0000318"/>
    <property type="project" value="GO_Central"/>
</dbReference>
<dbReference type="GO" id="GO:0005524">
    <property type="term" value="F:ATP binding"/>
    <property type="evidence" value="ECO:0000318"/>
    <property type="project" value="GO_Central"/>
</dbReference>
<dbReference type="GO" id="GO:0003677">
    <property type="term" value="F:DNA binding"/>
    <property type="evidence" value="ECO:0000318"/>
    <property type="project" value="GO_Central"/>
</dbReference>
<dbReference type="GO" id="GO:0003910">
    <property type="term" value="F:DNA ligase (ATP) activity"/>
    <property type="evidence" value="ECO:0000250"/>
    <property type="project" value="UniProtKB"/>
</dbReference>
<dbReference type="GO" id="GO:0046872">
    <property type="term" value="F:metal ion binding"/>
    <property type="evidence" value="ECO:0007669"/>
    <property type="project" value="UniProtKB-KW"/>
</dbReference>
<dbReference type="GO" id="GO:0071897">
    <property type="term" value="P:DNA biosynthetic process"/>
    <property type="evidence" value="ECO:0007669"/>
    <property type="project" value="InterPro"/>
</dbReference>
<dbReference type="GO" id="GO:0006310">
    <property type="term" value="P:DNA recombination"/>
    <property type="evidence" value="ECO:0007669"/>
    <property type="project" value="UniProtKB-KW"/>
</dbReference>
<dbReference type="GO" id="GO:0097680">
    <property type="term" value="P:double-strand break repair via classical nonhomologous end joining"/>
    <property type="evidence" value="ECO:0000250"/>
    <property type="project" value="UniProtKB"/>
</dbReference>
<dbReference type="GO" id="GO:0006303">
    <property type="term" value="P:double-strand break repair via nonhomologous end joining"/>
    <property type="evidence" value="ECO:0000318"/>
    <property type="project" value="GO_Central"/>
</dbReference>
<dbReference type="GO" id="GO:0043007">
    <property type="term" value="P:maintenance of rDNA"/>
    <property type="evidence" value="ECO:0007669"/>
    <property type="project" value="EnsemblFungi"/>
</dbReference>
<dbReference type="GO" id="GO:0006297">
    <property type="term" value="P:nucleotide-excision repair, DNA gap filling"/>
    <property type="evidence" value="ECO:0000318"/>
    <property type="project" value="GO_Central"/>
</dbReference>
<dbReference type="CDD" id="cd07903">
    <property type="entry name" value="Adenylation_DNA_ligase_IV"/>
    <property type="match status" value="1"/>
</dbReference>
<dbReference type="CDD" id="cd17744">
    <property type="entry name" value="BRCT_MDC1_rpt1"/>
    <property type="match status" value="1"/>
</dbReference>
<dbReference type="CDD" id="cd07968">
    <property type="entry name" value="OBF_DNA_ligase_IV"/>
    <property type="match status" value="1"/>
</dbReference>
<dbReference type="FunFam" id="2.40.50.140:FF:000381">
    <property type="entry name" value="DNA ligase"/>
    <property type="match status" value="1"/>
</dbReference>
<dbReference type="FunFam" id="3.30.470.30:FF:000021">
    <property type="entry name" value="DNA ligase"/>
    <property type="match status" value="1"/>
</dbReference>
<dbReference type="Gene3D" id="3.40.50.10190">
    <property type="entry name" value="BRCT domain"/>
    <property type="match status" value="2"/>
</dbReference>
<dbReference type="Gene3D" id="1.10.3260.10">
    <property type="entry name" value="DNA ligase, ATP-dependent, N-terminal domain"/>
    <property type="match status" value="1"/>
</dbReference>
<dbReference type="Gene3D" id="3.30.470.30">
    <property type="entry name" value="DNA ligase/mRNA capping enzyme"/>
    <property type="match status" value="1"/>
</dbReference>
<dbReference type="Gene3D" id="2.40.50.140">
    <property type="entry name" value="Nucleic acid-binding proteins"/>
    <property type="match status" value="1"/>
</dbReference>
<dbReference type="InterPro" id="IPR044125">
    <property type="entry name" value="Adenylation_DNA_ligase_IV"/>
</dbReference>
<dbReference type="InterPro" id="IPR001357">
    <property type="entry name" value="BRCT_dom"/>
</dbReference>
<dbReference type="InterPro" id="IPR036420">
    <property type="entry name" value="BRCT_dom_sf"/>
</dbReference>
<dbReference type="InterPro" id="IPR000977">
    <property type="entry name" value="DNA_ligase_ATP-dep"/>
</dbReference>
<dbReference type="InterPro" id="IPR012310">
    <property type="entry name" value="DNA_ligase_ATP-dep_cent"/>
</dbReference>
<dbReference type="InterPro" id="IPR016059">
    <property type="entry name" value="DNA_ligase_ATP-dep_CS"/>
</dbReference>
<dbReference type="InterPro" id="IPR012308">
    <property type="entry name" value="DNA_ligase_ATP-dep_N"/>
</dbReference>
<dbReference type="InterPro" id="IPR036599">
    <property type="entry name" value="DNA_ligase_N_sf"/>
</dbReference>
<dbReference type="InterPro" id="IPR029710">
    <property type="entry name" value="LIG4"/>
</dbReference>
<dbReference type="InterPro" id="IPR012340">
    <property type="entry name" value="NA-bd_OB-fold"/>
</dbReference>
<dbReference type="NCBIfam" id="TIGR00574">
    <property type="entry name" value="dnl1"/>
    <property type="match status" value="1"/>
</dbReference>
<dbReference type="PANTHER" id="PTHR45997">
    <property type="entry name" value="DNA LIGASE 4"/>
    <property type="match status" value="1"/>
</dbReference>
<dbReference type="PANTHER" id="PTHR45997:SF1">
    <property type="entry name" value="DNA LIGASE 4"/>
    <property type="match status" value="1"/>
</dbReference>
<dbReference type="Pfam" id="PF16589">
    <property type="entry name" value="BRCT_2"/>
    <property type="match status" value="1"/>
</dbReference>
<dbReference type="Pfam" id="PF01068">
    <property type="entry name" value="DNA_ligase_A_M"/>
    <property type="match status" value="1"/>
</dbReference>
<dbReference type="Pfam" id="PF04675">
    <property type="entry name" value="DNA_ligase_A_N"/>
    <property type="match status" value="1"/>
</dbReference>
<dbReference type="SMART" id="SM00292">
    <property type="entry name" value="BRCT"/>
    <property type="match status" value="2"/>
</dbReference>
<dbReference type="SUPFAM" id="SSF52113">
    <property type="entry name" value="BRCT domain"/>
    <property type="match status" value="2"/>
</dbReference>
<dbReference type="SUPFAM" id="SSF56091">
    <property type="entry name" value="DNA ligase/mRNA capping enzyme, catalytic domain"/>
    <property type="match status" value="1"/>
</dbReference>
<dbReference type="SUPFAM" id="SSF50249">
    <property type="entry name" value="Nucleic acid-binding proteins"/>
    <property type="match status" value="1"/>
</dbReference>
<dbReference type="PROSITE" id="PS50172">
    <property type="entry name" value="BRCT"/>
    <property type="match status" value="2"/>
</dbReference>
<dbReference type="PROSITE" id="PS00697">
    <property type="entry name" value="DNA_LIGASE_A1"/>
    <property type="match status" value="1"/>
</dbReference>
<dbReference type="PROSITE" id="PS50160">
    <property type="entry name" value="DNA_LIGASE_A3"/>
    <property type="match status" value="1"/>
</dbReference>
<sequence>MVIYPWLKNTTELTIALPKKPIIHANMDVLGSPRGGTPTGEHEINAQDGSPINFSPSPDFCWLCDELFIKLEEVALKKKDLGKPRKVRNLEITSNFVSLWRKTVGNDIYPALVLSLPYNDRRSYRVKDVTLVKALCKHMKLPRNSETERRLLHWKQNAPRGVKLSTFCVEELQKRRREPVVPKRMSIDEVNGMLDKLEHESNVGKWSYISLAESPAFNYCLEHMSYVELRFFFDIVLKVPIVSGLESLLLSCWHPDAESYFKVVSDLRIVAHTLYDPNERLEKNDLSVRIGYAFAPHMAQRVKIPYEKVSTKLGNDFYVEEKMDGDRIQVHYMDYGNSIAYFSRNGINYTYLYGENSSKGSISNHLKFVEGVKECILDGEMVSYDKEMQCILPFGLTKSGASHQVNFETTGHTEPTYRPLYAVFDLLYLNGQLLTNQDVVKRKEYLEKILIPSKNVVHLLSGPRCSDAEAITAALGAAVAHGSEGIVLKKARSKYSVGKRDDSWIKIKPEYLENFGENMDLVVIGRDKGRKDSFICALAVTDDSEKNNPSSYESGSDSDSDSEPIIVQPKIEKFISFCSIANGISNEEFKEIDRLTRGNWFPYDERKPPTDWVEFGTKTPREWIDPKNSVVLEVKARSIDNEESKSDLYKTGSTLYNAYCKRIRHDKNWSTASTVAEYDTAREARSYFNVSQNAKFGKDRSSPRKRRTFHLVGDIDVTKPSKADFLKGYYFYVTSGYFDLQSKKNIDASEIGEAVVSCGGTYIHNLRIRASLDKLYILGCKDTRELKMLIERGYDIIHPEWLMDCVKYGTMLQIEPKYVYSASEELMKQARNQEDKYGESYQLPVTEDTLKALANKQVEEGYASEMGTDAVSEYERLLIFKGWLFYILDDYAYHSSWSDIVKWNIESCGGEVTNDLELATIVVAVKDCFSQLSLQAVRNNIGARITGSNDVQPIPKIVTSEWVEACMEAQYLVDEDEYAAI</sequence>
<organism>
    <name type="scientific">Eremothecium gossypii (strain ATCC 10895 / CBS 109.51 / FGSC 9923 / NRRL Y-1056)</name>
    <name type="common">Yeast</name>
    <name type="synonym">Ashbya gossypii</name>
    <dbReference type="NCBI Taxonomy" id="284811"/>
    <lineage>
        <taxon>Eukaryota</taxon>
        <taxon>Fungi</taxon>
        <taxon>Dikarya</taxon>
        <taxon>Ascomycota</taxon>
        <taxon>Saccharomycotina</taxon>
        <taxon>Saccharomycetes</taxon>
        <taxon>Saccharomycetales</taxon>
        <taxon>Saccharomycetaceae</taxon>
        <taxon>Eremothecium</taxon>
    </lineage>
</organism>
<keyword id="KW-0067">ATP-binding</keyword>
<keyword id="KW-0227">DNA damage</keyword>
<keyword id="KW-0233">DNA recombination</keyword>
<keyword id="KW-0234">DNA repair</keyword>
<keyword id="KW-0436">Ligase</keyword>
<keyword id="KW-0460">Magnesium</keyword>
<keyword id="KW-0479">Metal-binding</keyword>
<keyword id="KW-0547">Nucleotide-binding</keyword>
<keyword id="KW-0539">Nucleus</keyword>
<keyword id="KW-1185">Reference proteome</keyword>
<keyword id="KW-0677">Repeat</keyword>
<reference key="1">
    <citation type="journal article" date="2004" name="Science">
        <title>The Ashbya gossypii genome as a tool for mapping the ancient Saccharomyces cerevisiae genome.</title>
        <authorList>
            <person name="Dietrich F.S."/>
            <person name="Voegeli S."/>
            <person name="Brachat S."/>
            <person name="Lerch A."/>
            <person name="Gates K."/>
            <person name="Steiner S."/>
            <person name="Mohr C."/>
            <person name="Poehlmann R."/>
            <person name="Luedi P."/>
            <person name="Choi S."/>
            <person name="Wing R.A."/>
            <person name="Flavier A."/>
            <person name="Gaffney T.D."/>
            <person name="Philippsen P."/>
        </authorList>
    </citation>
    <scope>NUCLEOTIDE SEQUENCE [LARGE SCALE GENOMIC DNA]</scope>
    <source>
        <strain>ATCC 10895 / CBS 109.51 / FGSC 9923 / NRRL Y-1056</strain>
    </source>
</reference>
<reference key="2">
    <citation type="journal article" date="2013" name="G3 (Bethesda)">
        <title>Genomes of Ashbya fungi isolated from insects reveal four mating-type loci, numerous translocations, lack of transposons, and distinct gene duplications.</title>
        <authorList>
            <person name="Dietrich F.S."/>
            <person name="Voegeli S."/>
            <person name="Kuo S."/>
            <person name="Philippsen P."/>
        </authorList>
    </citation>
    <scope>GENOME REANNOTATION</scope>
    <source>
        <strain>ATCC 10895 / CBS 109.51 / FGSC 9923 / NRRL Y-1056</strain>
    </source>
</reference>
<protein>
    <recommendedName>
        <fullName>DNA ligase 4</fullName>
        <ecNumber evidence="2">6.5.1.1</ecNumber>
    </recommendedName>
    <alternativeName>
        <fullName>DNA ligase IV</fullName>
    </alternativeName>
    <alternativeName>
        <fullName>Polydeoxyribonucleotide synthase [ATP] 4</fullName>
    </alternativeName>
</protein>
<proteinExistence type="inferred from homology"/>
<comment type="function">
    <text evidence="2">DNA ligase involved in DNA non-homologous end joining (NHEJ); required for double-strand break (DSB) repair.</text>
</comment>
<comment type="catalytic activity">
    <reaction evidence="5">
        <text>ATP + (deoxyribonucleotide)n-3'-hydroxyl + 5'-phospho-(deoxyribonucleotide)m = (deoxyribonucleotide)n+m + AMP + diphosphate.</text>
        <dbReference type="EC" id="6.5.1.1"/>
    </reaction>
</comment>
<comment type="cofactor">
    <cofactor evidence="1">
        <name>Mg(2+)</name>
        <dbReference type="ChEBI" id="CHEBI:18420"/>
    </cofactor>
</comment>
<comment type="subcellular location">
    <subcellularLocation>
        <location evidence="2">Nucleus</location>
    </subcellularLocation>
</comment>
<comment type="similarity">
    <text evidence="7">Belongs to the ATP-dependent DNA ligase family.</text>
</comment>
<name>DNLI4_EREGS</name>
<accession>Q75CA4</accession>
<feature type="chain" id="PRO_0000278374" description="DNA ligase 4">
    <location>
        <begin position="1"/>
        <end position="981"/>
    </location>
</feature>
<feature type="domain" description="BRCT 1" evidence="4">
    <location>
        <begin position="721"/>
        <end position="819"/>
    </location>
</feature>
<feature type="domain" description="BRCT 2" evidence="4">
    <location>
        <begin position="875"/>
        <end position="980"/>
    </location>
</feature>
<feature type="region of interest" description="Disordered" evidence="6">
    <location>
        <begin position="544"/>
        <end position="563"/>
    </location>
</feature>
<feature type="active site" description="N6-AMP-lysine intermediate" evidence="5">
    <location>
        <position position="322"/>
    </location>
</feature>
<feature type="binding site" evidence="1">
    <location>
        <position position="320"/>
    </location>
    <ligand>
        <name>ATP</name>
        <dbReference type="ChEBI" id="CHEBI:30616"/>
    </ligand>
</feature>
<feature type="binding site" evidence="1">
    <location>
        <position position="322"/>
    </location>
    <ligand>
        <name>ATP</name>
        <dbReference type="ChEBI" id="CHEBI:30616"/>
    </ligand>
</feature>
<feature type="binding site" evidence="1">
    <location>
        <position position="327"/>
    </location>
    <ligand>
        <name>ATP</name>
        <dbReference type="ChEBI" id="CHEBI:30616"/>
    </ligand>
</feature>
<feature type="binding site" evidence="1">
    <location>
        <position position="380"/>
    </location>
    <ligand>
        <name>ATP</name>
        <dbReference type="ChEBI" id="CHEBI:30616"/>
    </ligand>
</feature>
<feature type="binding site" evidence="3">
    <location>
        <position position="380"/>
    </location>
    <ligand>
        <name>Mg(2+)</name>
        <dbReference type="ChEBI" id="CHEBI:18420"/>
        <label>1</label>
    </ligand>
</feature>
<feature type="binding site" evidence="1">
    <location>
        <position position="424"/>
    </location>
    <ligand>
        <name>ATP</name>
        <dbReference type="ChEBI" id="CHEBI:30616"/>
    </ligand>
</feature>
<feature type="binding site" evidence="1">
    <location>
        <position position="484"/>
    </location>
    <ligand>
        <name>ATP</name>
        <dbReference type="ChEBI" id="CHEBI:30616"/>
    </ligand>
</feature>
<feature type="binding site" evidence="3">
    <location>
        <position position="484"/>
    </location>
    <ligand>
        <name>Mg(2+)</name>
        <dbReference type="ChEBI" id="CHEBI:18420"/>
        <label>2</label>
    </ligand>
</feature>
<feature type="binding site" evidence="1">
    <location>
        <position position="489"/>
    </location>
    <ligand>
        <name>ATP</name>
        <dbReference type="ChEBI" id="CHEBI:30616"/>
    </ligand>
</feature>
<feature type="binding site" evidence="1">
    <location>
        <position position="506"/>
    </location>
    <ligand>
        <name>ATP</name>
        <dbReference type="ChEBI" id="CHEBI:30616"/>
    </ligand>
</feature>
<feature type="binding site" evidence="1">
    <location>
        <position position="508"/>
    </location>
    <ligand>
        <name>ATP</name>
        <dbReference type="ChEBI" id="CHEBI:30616"/>
    </ligand>
</feature>